<feature type="chain" id="PRO_0000372993" description="Polymerase acidic protein">
    <location>
        <begin position="1"/>
        <end position="716"/>
    </location>
</feature>
<feature type="short sequence motif" description="Nuclear localization signal 1 (NLS1)" evidence="1 2">
    <location>
        <begin position="124"/>
        <end position="139"/>
    </location>
</feature>
<feature type="short sequence motif" description="Nuclear localization signal 2 (NLS2)" evidence="1 2">
    <location>
        <begin position="184"/>
        <end position="247"/>
    </location>
</feature>
<feature type="binding site" evidence="2">
    <location>
        <position position="41"/>
    </location>
    <ligand>
        <name>Mn(2+)</name>
        <dbReference type="ChEBI" id="CHEBI:29035"/>
        <label>1</label>
    </ligand>
</feature>
<feature type="binding site" evidence="2">
    <location>
        <position position="80"/>
    </location>
    <ligand>
        <name>Mn(2+)</name>
        <dbReference type="ChEBI" id="CHEBI:29035"/>
        <label>2</label>
    </ligand>
</feature>
<feature type="binding site" evidence="2">
    <location>
        <position position="108"/>
    </location>
    <ligand>
        <name>Mn(2+)</name>
        <dbReference type="ChEBI" id="CHEBI:29035"/>
        <label>1</label>
    </ligand>
</feature>
<feature type="binding site" evidence="2">
    <location>
        <position position="108"/>
    </location>
    <ligand>
        <name>Mn(2+)</name>
        <dbReference type="ChEBI" id="CHEBI:29035"/>
        <label>2</label>
    </ligand>
</feature>
<feature type="binding site" evidence="2">
    <location>
        <position position="119"/>
    </location>
    <ligand>
        <name>Mn(2+)</name>
        <dbReference type="ChEBI" id="CHEBI:29035"/>
        <label>1</label>
    </ligand>
</feature>
<feature type="binding site" evidence="2">
    <location>
        <position position="120"/>
    </location>
    <ligand>
        <name>Mn(2+)</name>
        <dbReference type="ChEBI" id="CHEBI:29035"/>
        <label>1</label>
    </ligand>
</feature>
<accession>Q289M0</accession>
<keyword id="KW-1157">Cap snatching</keyword>
<keyword id="KW-0255">Endonuclease</keyword>
<keyword id="KW-1262">Eukaryotic host gene expression shutoff by virus</keyword>
<keyword id="KW-1191">Eukaryotic host transcription shutoff by virus</keyword>
<keyword id="KW-1035">Host cytoplasm</keyword>
<keyword id="KW-1190">Host gene expression shutoff by virus</keyword>
<keyword id="KW-1048">Host nucleus</keyword>
<keyword id="KW-0945">Host-virus interaction</keyword>
<keyword id="KW-0378">Hydrolase</keyword>
<keyword id="KW-1104">Inhibition of host RNA polymerase II by virus</keyword>
<keyword id="KW-0464">Manganese</keyword>
<keyword id="KW-0479">Metal-binding</keyword>
<keyword id="KW-0540">Nuclease</keyword>
<keyword id="KW-0597">Phosphoprotein</keyword>
<keyword id="KW-0688">Ribosomal frameshifting</keyword>
<proteinExistence type="inferred from homology"/>
<name>PA_I00A1</name>
<sequence>MEDFVRQCFNPMIVELAEKAMKEYGEDLKIETNKFAAICTHLEVCFMYSDFHFINEQGESIIVEPEDPNALLKHRFEIIEGRDRTMAWTVVNSICNTTGAEKPKFLPDLYDYKENRFIEIGVTRREVHIYYLEKANKIKSEKTHIHIFSFTGEEMATKADYTLDEESRARIKTRLFTIRQEMASRGLWDSFRQSERGEETIEERFEITGTMRRLADQSLPPNFSCIENFRAYVDGFEPNGYIEGKLSQMSKEVNARIEPFLKTTPRPIRLPDGPPCFQRSKFLLMDSLKLSIEDPNHEGEGIPLYDAIKCMRTFFGWKEPSVVKPHGKGINPNYLLSWKQVLEELQDIESEEKIPRTKNMKKTSQLKWALGENMAPEKVDFDDCKDISDLKQYDSDEPELRSFSSWIQNEFNKACELTDSIWIELDEIGEDVAPIEHIASMRRNYFTAEVSHCRATEYIMKGVYINTALLNASCAAMDDFQLIPMISKCRTKEGRRKTNLYGFIVKGRSHLRNDTDVVNFVSMEFSLTDPRLEPHKWEKYCVLEIGDMLIRSAIGQVSRPMFLYVRTNGTSKIKMKWGMEMRRCLLQSLQQIESMIEAESSVKEKDMTKEFFENRSETWPIGESPKGVEEGSIGKVCRTLLAKSVFNSLYASPQLEGFSAESRKLLLIVQALRDNLEPGTFDLGGLYEAIEECLINDPWVLLNASWFNSFLTHALR</sequence>
<dbReference type="EC" id="3.1.-.-" evidence="2"/>
<dbReference type="EMBL" id="CY009209">
    <property type="protein sequence ID" value="ABD61525.1"/>
    <property type="molecule type" value="Genomic_RNA"/>
</dbReference>
<dbReference type="SMR" id="Q289M0"/>
<dbReference type="MEROPS" id="S62.001"/>
<dbReference type="Proteomes" id="UP001366552">
    <property type="component" value="Genome"/>
</dbReference>
<dbReference type="GO" id="GO:0030430">
    <property type="term" value="C:host cell cytoplasm"/>
    <property type="evidence" value="ECO:0007669"/>
    <property type="project" value="UniProtKB-SubCell"/>
</dbReference>
<dbReference type="GO" id="GO:0042025">
    <property type="term" value="C:host cell nucleus"/>
    <property type="evidence" value="ECO:0007669"/>
    <property type="project" value="UniProtKB-SubCell"/>
</dbReference>
<dbReference type="GO" id="GO:0004519">
    <property type="term" value="F:endonuclease activity"/>
    <property type="evidence" value="ECO:0007669"/>
    <property type="project" value="UniProtKB-KW"/>
</dbReference>
<dbReference type="GO" id="GO:0046872">
    <property type="term" value="F:metal ion binding"/>
    <property type="evidence" value="ECO:0007669"/>
    <property type="project" value="UniProtKB-KW"/>
</dbReference>
<dbReference type="GO" id="GO:0003723">
    <property type="term" value="F:RNA binding"/>
    <property type="evidence" value="ECO:0007669"/>
    <property type="project" value="UniProtKB-UniRule"/>
</dbReference>
<dbReference type="GO" id="GO:0075526">
    <property type="term" value="P:cap snatching"/>
    <property type="evidence" value="ECO:0007669"/>
    <property type="project" value="UniProtKB-UniRule"/>
</dbReference>
<dbReference type="GO" id="GO:0006351">
    <property type="term" value="P:DNA-templated transcription"/>
    <property type="evidence" value="ECO:0007669"/>
    <property type="project" value="UniProtKB-UniRule"/>
</dbReference>
<dbReference type="GO" id="GO:0039657">
    <property type="term" value="P:symbiont-mediated suppression of host gene expression"/>
    <property type="evidence" value="ECO:0007669"/>
    <property type="project" value="UniProtKB-KW"/>
</dbReference>
<dbReference type="GO" id="GO:0039523">
    <property type="term" value="P:symbiont-mediated suppression of host mRNA transcription via inhibition of RNA polymerase II activity"/>
    <property type="evidence" value="ECO:0007669"/>
    <property type="project" value="UniProtKB-UniRule"/>
</dbReference>
<dbReference type="GO" id="GO:0039694">
    <property type="term" value="P:viral RNA genome replication"/>
    <property type="evidence" value="ECO:0007669"/>
    <property type="project" value="InterPro"/>
</dbReference>
<dbReference type="GO" id="GO:0075523">
    <property type="term" value="P:viral translational frameshifting"/>
    <property type="evidence" value="ECO:0007669"/>
    <property type="project" value="UniProtKB-KW"/>
</dbReference>
<dbReference type="FunFam" id="3.40.91.90:FF:000001">
    <property type="entry name" value="Polymerase acidic protein"/>
    <property type="match status" value="1"/>
</dbReference>
<dbReference type="Gene3D" id="3.40.91.90">
    <property type="entry name" value="Influenza RNA-dependent RNA polymerase subunit PA, endonuclease domain"/>
    <property type="match status" value="1"/>
</dbReference>
<dbReference type="HAMAP" id="MF_04063">
    <property type="entry name" value="INFV_PA"/>
    <property type="match status" value="1"/>
</dbReference>
<dbReference type="InterPro" id="IPR037534">
    <property type="entry name" value="INFV_PA"/>
</dbReference>
<dbReference type="InterPro" id="IPR001009">
    <property type="entry name" value="PA/PA-X"/>
</dbReference>
<dbReference type="InterPro" id="IPR038372">
    <property type="entry name" value="PA/PA-X_sf"/>
</dbReference>
<dbReference type="Pfam" id="PF00603">
    <property type="entry name" value="Flu_PA"/>
    <property type="match status" value="1"/>
</dbReference>
<evidence type="ECO:0000250" key="1">
    <source>
        <dbReference type="UniProtKB" id="P03433"/>
    </source>
</evidence>
<evidence type="ECO:0000255" key="2">
    <source>
        <dbReference type="HAMAP-Rule" id="MF_04063"/>
    </source>
</evidence>
<organismHost>
    <name type="scientific">Aves</name>
    <dbReference type="NCBI Taxonomy" id="8782"/>
</organismHost>
<organismHost>
    <name type="scientific">Homo sapiens</name>
    <name type="common">Human</name>
    <dbReference type="NCBI Taxonomy" id="9606"/>
</organismHost>
<organismHost>
    <name type="scientific">Sus scrofa</name>
    <name type="common">Pig</name>
    <dbReference type="NCBI Taxonomy" id="9823"/>
</organismHost>
<gene>
    <name evidence="2" type="primary">PA</name>
</gene>
<protein>
    <recommendedName>
        <fullName evidence="2">Polymerase acidic protein</fullName>
        <ecNumber evidence="2">3.1.-.-</ecNumber>
    </recommendedName>
    <alternativeName>
        <fullName evidence="2">RNA-directed RNA polymerase subunit P2</fullName>
    </alternativeName>
</protein>
<organism>
    <name type="scientific">Influenza A virus (strain A/New Zealand:South Canterbury/35/2000 H1N1)</name>
    <dbReference type="NCBI Taxonomy" id="363066"/>
    <lineage>
        <taxon>Viruses</taxon>
        <taxon>Riboviria</taxon>
        <taxon>Orthornavirae</taxon>
        <taxon>Negarnaviricota</taxon>
        <taxon>Polyploviricotina</taxon>
        <taxon>Insthoviricetes</taxon>
        <taxon>Articulavirales</taxon>
        <taxon>Orthomyxoviridae</taxon>
        <taxon>Alphainfluenzavirus</taxon>
        <taxon>Alphainfluenzavirus influenzae</taxon>
        <taxon>Influenza A virus</taxon>
    </lineage>
</organism>
<comment type="function">
    <text evidence="2">Plays an essential role in viral RNA transcription and replication by forming the heterotrimeric polymerase complex together with PB1 and PB2 subunits. The complex transcribes viral mRNAs by using a unique mechanism called cap-snatching. It consists in the hijacking and cleavage of host capped pre-mRNAs. These short capped RNAs are then used as primers for viral mRNAs. The PB2 subunit is responsible for the binding of the 5' cap of cellular pre-mRNAs which are subsequently cleaved after 10-13 nucleotides by the PA subunit that carries the endonuclease activity.</text>
</comment>
<comment type="cofactor">
    <cofactor evidence="2">
        <name>Mn(2+)</name>
        <dbReference type="ChEBI" id="CHEBI:29035"/>
    </cofactor>
    <text evidence="2">Binds 2 manganese ions per subunit.</text>
</comment>
<comment type="subunit">
    <text evidence="1 2">Influenza RNA polymerase is composed of three subunits: PB1, PB2 and PA. Interacts (via C-terminus) with PB1 (via N-terminus).</text>
</comment>
<comment type="subcellular location">
    <subcellularLocation>
        <location evidence="2">Host cytoplasm</location>
    </subcellularLocation>
    <subcellularLocation>
        <location evidence="2">Host nucleus</location>
    </subcellularLocation>
    <text evidence="1 2">PB1 and PA are transported in the host nucleus as a complex.</text>
</comment>
<comment type="alternative products">
    <event type="ribosomal frameshifting"/>
    <isoform>
        <id>Q289M0-1</id>
        <name>PA</name>
        <sequence type="displayed"/>
    </isoform>
    <isoform>
        <id>P0DJT6-1</id>
        <name>PA-X</name>
        <sequence type="external"/>
    </isoform>
</comment>
<comment type="PTM">
    <text evidence="1 2">Phosphorylated on serines and threonines by host kinases, including human casein kinase II.</text>
</comment>
<comment type="similarity">
    <text evidence="2">Belongs to the influenza viruses PA family.</text>
</comment>
<reference key="1">
    <citation type="submission" date="2006-03" db="EMBL/GenBank/DDBJ databases">
        <title>The NIAID influenza genome sequencing project.</title>
        <authorList>
            <person name="Ghedin E."/>
            <person name="Spiro D."/>
            <person name="Sengamalay N."/>
            <person name="Zaborsky J."/>
            <person name="Feldblyum T."/>
            <person name="Subbu V."/>
            <person name="Sparenborg J."/>
            <person name="Groveman L."/>
            <person name="Halpin R."/>
            <person name="Shumway M."/>
            <person name="Sitz J."/>
            <person name="Katzel D."/>
            <person name="Koo H."/>
            <person name="Salzberg S.L."/>
            <person name="Jennings L."/>
            <person name="Smit M."/>
            <person name="Wells V."/>
            <person name="Bao Y."/>
            <person name="Bolotov P."/>
            <person name="Dernovoy D."/>
            <person name="Kiryutin B."/>
            <person name="Lipman D.J."/>
            <person name="Tatusova T."/>
        </authorList>
    </citation>
    <scope>NUCLEOTIDE SEQUENCE [GENOMIC RNA]</scope>
</reference>
<reference key="2">
    <citation type="submission" date="2006-03" db="EMBL/GenBank/DDBJ databases">
        <authorList>
            <consortium name="The NIAID Influenza Genome Sequencing Consortium"/>
        </authorList>
    </citation>
    <scope>NUCLEOTIDE SEQUENCE [GENOMIC RNA]</scope>
</reference>